<protein>
    <recommendedName>
        <fullName>Beta sliding clamp</fullName>
        <shortName>Beta clamp</shortName>
        <shortName>Sliding clamp</shortName>
    </recommendedName>
    <alternativeName>
        <fullName>Beta-clamp processivity factor</fullName>
    </alternativeName>
    <alternativeName>
        <fullName>DNA polymerase III beta sliding clamp subunit</fullName>
    </alternativeName>
    <alternativeName>
        <fullName>DNA polymerase III subunit beta</fullName>
    </alternativeName>
</protein>
<keyword id="KW-0963">Cytoplasm</keyword>
<keyword id="KW-0235">DNA replication</keyword>
<keyword id="KW-0238">DNA-binding</keyword>
<keyword id="KW-0239">DNA-directed DNA polymerase</keyword>
<keyword id="KW-0548">Nucleotidyltransferase</keyword>
<keyword id="KW-1185">Reference proteome</keyword>
<keyword id="KW-0808">Transferase</keyword>
<organism>
    <name type="scientific">Streptomyces coelicolor (strain ATCC BAA-471 / A3(2) / M145)</name>
    <dbReference type="NCBI Taxonomy" id="100226"/>
    <lineage>
        <taxon>Bacteria</taxon>
        <taxon>Bacillati</taxon>
        <taxon>Actinomycetota</taxon>
        <taxon>Actinomycetes</taxon>
        <taxon>Kitasatosporales</taxon>
        <taxon>Streptomycetaceae</taxon>
        <taxon>Streptomyces</taxon>
        <taxon>Streptomyces albidoflavus group</taxon>
    </lineage>
</organism>
<feature type="chain" id="PRO_0000105471" description="Beta sliding clamp">
    <location>
        <begin position="1"/>
        <end position="376"/>
    </location>
</feature>
<proteinExistence type="inferred from homology"/>
<sequence>MKIRVERDVLAEAVAWAARSLPARPPAPVLAGLLLKAEEGQLSLSSFDYEVSARVSVEAEIEEEGTVLVSGRLLADISRALPNRPVEISTDGVRATVVCGSSRFTLHTLPVEEYPALPQMPEATGTVPGEVFASAVQQVAIAAGRDDTLPVLTGVRIEIEGDSVTLASTDRYRFAVREFLWKPENPDISAVALVPAKTLQDTAKALTSGDQVILALSGSGAGEGLIGFEGAGRRTTTRLLEGDLPKYKTLFPTEFNSVAVIETAPFVEAVKRVALVAERNTPVRLSFEQGVLILEAGSSDDAQAVERVDAQLEGDDISIAFNPTFLLDGLSAIDSPVAQLSFTTSTKPALLSGRPAVDAEADEAYKYLIMPVRLSG</sequence>
<comment type="function">
    <text evidence="1">Confers DNA tethering and processivity to DNA polymerases and other proteins. Acts as a clamp, forming a ring around DNA (a reaction catalyzed by the clamp-loading complex) which diffuses in an ATP-independent manner freely and bidirectionally along dsDNA. Initially characterized for its ability to contact the catalytic subunit of DNA polymerase III (Pol III), a complex, multichain enzyme responsible for most of the replicative synthesis in bacteria; Pol III exhibits 3'-5' exonuclease proofreading activity. The beta chain is required for initiation of replication as well as for processivity of DNA replication.</text>
</comment>
<comment type="subunit">
    <text evidence="1">Forms a ring-shaped head-to-tail homodimer around DNA which binds and tethers DNA polymerases and other proteins to the DNA. The DNA replisome complex has a single clamp-loading complex (3 tau and 1 each of delta, delta', psi and chi subunits) which binds 3 Pol III cores (1 core on the leading strand and 2 on the lagging strand) each with a beta sliding clamp dimer. Additional proteins in the replisome are other copies of gamma, psi and chi, Ssb, DNA helicase and RNA primase.</text>
</comment>
<comment type="subcellular location">
    <subcellularLocation>
        <location evidence="1">Cytoplasm</location>
    </subcellularLocation>
</comment>
<comment type="similarity">
    <text evidence="2">Belongs to the beta sliding clamp family.</text>
</comment>
<name>DPO3B_STRCO</name>
<accession>P27903</accession>
<gene>
    <name type="primary">dnaN</name>
    <name type="ordered locus">SCO3878</name>
    <name type="ORF">SCH18.15c</name>
</gene>
<dbReference type="EMBL" id="AF187159">
    <property type="protein sequence ID" value="AAA26735.1"/>
    <property type="molecule type" value="Genomic_DNA"/>
</dbReference>
<dbReference type="EMBL" id="AL939118">
    <property type="protein sequence ID" value="CAB92998.1"/>
    <property type="molecule type" value="Genomic_DNA"/>
</dbReference>
<dbReference type="PIR" id="B41870">
    <property type="entry name" value="B41870"/>
</dbReference>
<dbReference type="RefSeq" id="NP_628065.1">
    <property type="nucleotide sequence ID" value="NC_003888.3"/>
</dbReference>
<dbReference type="RefSeq" id="WP_003975054.1">
    <property type="nucleotide sequence ID" value="NZ_VNID01000003.1"/>
</dbReference>
<dbReference type="SMR" id="P27903"/>
<dbReference type="FunCoup" id="P27903">
    <property type="interactions" value="55"/>
</dbReference>
<dbReference type="STRING" id="100226.gene:17761505"/>
<dbReference type="PaxDb" id="100226-SCO3878"/>
<dbReference type="GeneID" id="96649423"/>
<dbReference type="KEGG" id="sco:SCO3878"/>
<dbReference type="PATRIC" id="fig|100226.15.peg.3951"/>
<dbReference type="eggNOG" id="COG0592">
    <property type="taxonomic scope" value="Bacteria"/>
</dbReference>
<dbReference type="HOGENOM" id="CLU_038149_1_1_11"/>
<dbReference type="InParanoid" id="P27903"/>
<dbReference type="OrthoDB" id="468978at2"/>
<dbReference type="PhylomeDB" id="P27903"/>
<dbReference type="Proteomes" id="UP000001973">
    <property type="component" value="Chromosome"/>
</dbReference>
<dbReference type="GO" id="GO:0005737">
    <property type="term" value="C:cytoplasm"/>
    <property type="evidence" value="ECO:0007669"/>
    <property type="project" value="UniProtKB-SubCell"/>
</dbReference>
<dbReference type="GO" id="GO:0009360">
    <property type="term" value="C:DNA polymerase III complex"/>
    <property type="evidence" value="ECO:0007669"/>
    <property type="project" value="InterPro"/>
</dbReference>
<dbReference type="GO" id="GO:0008408">
    <property type="term" value="F:3'-5' exonuclease activity"/>
    <property type="evidence" value="ECO:0007669"/>
    <property type="project" value="InterPro"/>
</dbReference>
<dbReference type="GO" id="GO:0003677">
    <property type="term" value="F:DNA binding"/>
    <property type="evidence" value="ECO:0007669"/>
    <property type="project" value="UniProtKB-KW"/>
</dbReference>
<dbReference type="GO" id="GO:0003887">
    <property type="term" value="F:DNA-directed DNA polymerase activity"/>
    <property type="evidence" value="ECO:0007669"/>
    <property type="project" value="UniProtKB-KW"/>
</dbReference>
<dbReference type="GO" id="GO:0006271">
    <property type="term" value="P:DNA strand elongation involved in DNA replication"/>
    <property type="evidence" value="ECO:0000318"/>
    <property type="project" value="GO_Central"/>
</dbReference>
<dbReference type="CDD" id="cd00140">
    <property type="entry name" value="beta_clamp"/>
    <property type="match status" value="1"/>
</dbReference>
<dbReference type="FunFam" id="3.10.150.10:FF:000001">
    <property type="entry name" value="Beta sliding clamp"/>
    <property type="match status" value="1"/>
</dbReference>
<dbReference type="FunFam" id="3.10.150.10:FF:000004">
    <property type="entry name" value="Beta sliding clamp"/>
    <property type="match status" value="1"/>
</dbReference>
<dbReference type="FunFam" id="3.10.150.10:FF:000005">
    <property type="entry name" value="Beta sliding clamp"/>
    <property type="match status" value="1"/>
</dbReference>
<dbReference type="Gene3D" id="3.10.150.10">
    <property type="entry name" value="DNA Polymerase III, subunit A, domain 2"/>
    <property type="match status" value="3"/>
</dbReference>
<dbReference type="InterPro" id="IPR046938">
    <property type="entry name" value="DNA_clamp_sf"/>
</dbReference>
<dbReference type="InterPro" id="IPR001001">
    <property type="entry name" value="DNA_polIII_beta"/>
</dbReference>
<dbReference type="InterPro" id="IPR022635">
    <property type="entry name" value="DNA_polIII_beta_C"/>
</dbReference>
<dbReference type="InterPro" id="IPR022637">
    <property type="entry name" value="DNA_polIII_beta_cen"/>
</dbReference>
<dbReference type="InterPro" id="IPR022634">
    <property type="entry name" value="DNA_polIII_beta_N"/>
</dbReference>
<dbReference type="NCBIfam" id="TIGR00663">
    <property type="entry name" value="dnan"/>
    <property type="match status" value="1"/>
</dbReference>
<dbReference type="PANTHER" id="PTHR30478:SF0">
    <property type="entry name" value="BETA SLIDING CLAMP"/>
    <property type="match status" value="1"/>
</dbReference>
<dbReference type="PANTHER" id="PTHR30478">
    <property type="entry name" value="DNA POLYMERASE III SUBUNIT BETA"/>
    <property type="match status" value="1"/>
</dbReference>
<dbReference type="Pfam" id="PF00712">
    <property type="entry name" value="DNA_pol3_beta"/>
    <property type="match status" value="1"/>
</dbReference>
<dbReference type="Pfam" id="PF02767">
    <property type="entry name" value="DNA_pol3_beta_2"/>
    <property type="match status" value="1"/>
</dbReference>
<dbReference type="Pfam" id="PF02768">
    <property type="entry name" value="DNA_pol3_beta_3"/>
    <property type="match status" value="1"/>
</dbReference>
<dbReference type="PIRSF" id="PIRSF000804">
    <property type="entry name" value="DNA_pol_III_b"/>
    <property type="match status" value="1"/>
</dbReference>
<dbReference type="SMART" id="SM00480">
    <property type="entry name" value="POL3Bc"/>
    <property type="match status" value="1"/>
</dbReference>
<dbReference type="SUPFAM" id="SSF55979">
    <property type="entry name" value="DNA clamp"/>
    <property type="match status" value="3"/>
</dbReference>
<evidence type="ECO:0000250" key="1">
    <source>
        <dbReference type="UniProtKB" id="P0A988"/>
    </source>
</evidence>
<evidence type="ECO:0000305" key="2"/>
<reference key="1">
    <citation type="journal article" date="1992" name="J. Bacteriol.">
        <title>Conserved gene arrangement in the origin region of the Streptomyces coelicolor chromosome.</title>
        <authorList>
            <person name="Calcutt M.J."/>
            <person name="Schmidt F.J."/>
        </authorList>
    </citation>
    <scope>NUCLEOTIDE SEQUENCE [GENOMIC DNA]</scope>
    <source>
        <strain>A3(2) / NRRL B-16638</strain>
    </source>
</reference>
<reference key="2">
    <citation type="journal article" date="2002" name="Nature">
        <title>Complete genome sequence of the model actinomycete Streptomyces coelicolor A3(2).</title>
        <authorList>
            <person name="Bentley S.D."/>
            <person name="Chater K.F."/>
            <person name="Cerdeno-Tarraga A.-M."/>
            <person name="Challis G.L."/>
            <person name="Thomson N.R."/>
            <person name="James K.D."/>
            <person name="Harris D.E."/>
            <person name="Quail M.A."/>
            <person name="Kieser H."/>
            <person name="Harper D."/>
            <person name="Bateman A."/>
            <person name="Brown S."/>
            <person name="Chandra G."/>
            <person name="Chen C.W."/>
            <person name="Collins M."/>
            <person name="Cronin A."/>
            <person name="Fraser A."/>
            <person name="Goble A."/>
            <person name="Hidalgo J."/>
            <person name="Hornsby T."/>
            <person name="Howarth S."/>
            <person name="Huang C.-H."/>
            <person name="Kieser T."/>
            <person name="Larke L."/>
            <person name="Murphy L.D."/>
            <person name="Oliver K."/>
            <person name="O'Neil S."/>
            <person name="Rabbinowitsch E."/>
            <person name="Rajandream M.A."/>
            <person name="Rutherford K.M."/>
            <person name="Rutter S."/>
            <person name="Seeger K."/>
            <person name="Saunders D."/>
            <person name="Sharp S."/>
            <person name="Squares R."/>
            <person name="Squares S."/>
            <person name="Taylor K."/>
            <person name="Warren T."/>
            <person name="Wietzorrek A."/>
            <person name="Woodward J.R."/>
            <person name="Barrell B.G."/>
            <person name="Parkhill J."/>
            <person name="Hopwood D.A."/>
        </authorList>
    </citation>
    <scope>NUCLEOTIDE SEQUENCE [LARGE SCALE GENOMIC DNA]</scope>
    <source>
        <strain>ATCC BAA-471 / A3(2) / M145</strain>
    </source>
</reference>